<organism>
    <name type="scientific">Lactobacillus gasseri (strain ATCC 33323 / DSM 20243 / BCRC 14619 / CIP 102991 / JCM 1131 / KCTC 3163 / NCIMB 11718 / NCTC 13722 / AM63)</name>
    <dbReference type="NCBI Taxonomy" id="324831"/>
    <lineage>
        <taxon>Bacteria</taxon>
        <taxon>Bacillati</taxon>
        <taxon>Bacillota</taxon>
        <taxon>Bacilli</taxon>
        <taxon>Lactobacillales</taxon>
        <taxon>Lactobacillaceae</taxon>
        <taxon>Lactobacillus</taxon>
    </lineage>
</organism>
<name>RS11_LACGA</name>
<sequence length="129" mass="13620">MAAKKTARKRRVKKHVESGVAHIHSTFNNTLVMITDVQGNAVAWSSAGALGFKGSRKSTPFAAQMAAEAAAKSAMDQGMKHVEVSVKGPGAGREAAIRALQAAGLEITAIRDVTPVPHNGSRPPKRRRV</sequence>
<keyword id="KW-0687">Ribonucleoprotein</keyword>
<keyword id="KW-0689">Ribosomal protein</keyword>
<keyword id="KW-0694">RNA-binding</keyword>
<keyword id="KW-0699">rRNA-binding</keyword>
<evidence type="ECO:0000255" key="1">
    <source>
        <dbReference type="HAMAP-Rule" id="MF_01310"/>
    </source>
</evidence>
<evidence type="ECO:0000305" key="2"/>
<feature type="chain" id="PRO_0000294777" description="Small ribosomal subunit protein uS11">
    <location>
        <begin position="1"/>
        <end position="129"/>
    </location>
</feature>
<proteinExistence type="inferred from homology"/>
<dbReference type="EMBL" id="CP000413">
    <property type="protein sequence ID" value="ABJ59721.1"/>
    <property type="molecule type" value="Genomic_DNA"/>
</dbReference>
<dbReference type="RefSeq" id="WP_003647813.1">
    <property type="nucleotide sequence ID" value="NZ_WBMG01000001.1"/>
</dbReference>
<dbReference type="SMR" id="Q046A1"/>
<dbReference type="GeneID" id="83569779"/>
<dbReference type="KEGG" id="lga:LGAS_0315"/>
<dbReference type="HOGENOM" id="CLU_072439_5_0_9"/>
<dbReference type="BioCyc" id="LGAS324831:G1G6Y-314-MONOMER"/>
<dbReference type="Proteomes" id="UP000000664">
    <property type="component" value="Chromosome"/>
</dbReference>
<dbReference type="GO" id="GO:1990904">
    <property type="term" value="C:ribonucleoprotein complex"/>
    <property type="evidence" value="ECO:0007669"/>
    <property type="project" value="UniProtKB-KW"/>
</dbReference>
<dbReference type="GO" id="GO:0005840">
    <property type="term" value="C:ribosome"/>
    <property type="evidence" value="ECO:0007669"/>
    <property type="project" value="UniProtKB-KW"/>
</dbReference>
<dbReference type="GO" id="GO:0019843">
    <property type="term" value="F:rRNA binding"/>
    <property type="evidence" value="ECO:0007669"/>
    <property type="project" value="UniProtKB-UniRule"/>
</dbReference>
<dbReference type="GO" id="GO:0003735">
    <property type="term" value="F:structural constituent of ribosome"/>
    <property type="evidence" value="ECO:0007669"/>
    <property type="project" value="InterPro"/>
</dbReference>
<dbReference type="GO" id="GO:0006412">
    <property type="term" value="P:translation"/>
    <property type="evidence" value="ECO:0007669"/>
    <property type="project" value="UniProtKB-UniRule"/>
</dbReference>
<dbReference type="FunFam" id="3.30.420.80:FF:000001">
    <property type="entry name" value="30S ribosomal protein S11"/>
    <property type="match status" value="1"/>
</dbReference>
<dbReference type="Gene3D" id="3.30.420.80">
    <property type="entry name" value="Ribosomal protein S11"/>
    <property type="match status" value="1"/>
</dbReference>
<dbReference type="HAMAP" id="MF_01310">
    <property type="entry name" value="Ribosomal_uS11"/>
    <property type="match status" value="1"/>
</dbReference>
<dbReference type="InterPro" id="IPR001971">
    <property type="entry name" value="Ribosomal_uS11"/>
</dbReference>
<dbReference type="InterPro" id="IPR019981">
    <property type="entry name" value="Ribosomal_uS11_bac-type"/>
</dbReference>
<dbReference type="InterPro" id="IPR018102">
    <property type="entry name" value="Ribosomal_uS11_CS"/>
</dbReference>
<dbReference type="InterPro" id="IPR036967">
    <property type="entry name" value="Ribosomal_uS11_sf"/>
</dbReference>
<dbReference type="NCBIfam" id="NF003698">
    <property type="entry name" value="PRK05309.1"/>
    <property type="match status" value="1"/>
</dbReference>
<dbReference type="NCBIfam" id="TIGR03632">
    <property type="entry name" value="uS11_bact"/>
    <property type="match status" value="1"/>
</dbReference>
<dbReference type="PANTHER" id="PTHR11759">
    <property type="entry name" value="40S RIBOSOMAL PROTEIN S14/30S RIBOSOMAL PROTEIN S11"/>
    <property type="match status" value="1"/>
</dbReference>
<dbReference type="Pfam" id="PF00411">
    <property type="entry name" value="Ribosomal_S11"/>
    <property type="match status" value="1"/>
</dbReference>
<dbReference type="PIRSF" id="PIRSF002131">
    <property type="entry name" value="Ribosomal_S11"/>
    <property type="match status" value="1"/>
</dbReference>
<dbReference type="SUPFAM" id="SSF53137">
    <property type="entry name" value="Translational machinery components"/>
    <property type="match status" value="1"/>
</dbReference>
<dbReference type="PROSITE" id="PS00054">
    <property type="entry name" value="RIBOSOMAL_S11"/>
    <property type="match status" value="1"/>
</dbReference>
<protein>
    <recommendedName>
        <fullName evidence="1">Small ribosomal subunit protein uS11</fullName>
    </recommendedName>
    <alternativeName>
        <fullName evidence="2">30S ribosomal protein S11</fullName>
    </alternativeName>
</protein>
<accession>Q046A1</accession>
<gene>
    <name evidence="1" type="primary">rpsK</name>
    <name type="ordered locus">LGAS_0315</name>
</gene>
<comment type="function">
    <text evidence="1">Located on the platform of the 30S subunit, it bridges several disparate RNA helices of the 16S rRNA. Forms part of the Shine-Dalgarno cleft in the 70S ribosome.</text>
</comment>
<comment type="subunit">
    <text evidence="1">Part of the 30S ribosomal subunit. Interacts with proteins S7 and S18. Binds to IF-3.</text>
</comment>
<comment type="similarity">
    <text evidence="1">Belongs to the universal ribosomal protein uS11 family.</text>
</comment>
<reference key="1">
    <citation type="journal article" date="2006" name="Proc. Natl. Acad. Sci. U.S.A.">
        <title>Comparative genomics of the lactic acid bacteria.</title>
        <authorList>
            <person name="Makarova K.S."/>
            <person name="Slesarev A."/>
            <person name="Wolf Y.I."/>
            <person name="Sorokin A."/>
            <person name="Mirkin B."/>
            <person name="Koonin E.V."/>
            <person name="Pavlov A."/>
            <person name="Pavlova N."/>
            <person name="Karamychev V."/>
            <person name="Polouchine N."/>
            <person name="Shakhova V."/>
            <person name="Grigoriev I."/>
            <person name="Lou Y."/>
            <person name="Rohksar D."/>
            <person name="Lucas S."/>
            <person name="Huang K."/>
            <person name="Goodstein D.M."/>
            <person name="Hawkins T."/>
            <person name="Plengvidhya V."/>
            <person name="Welker D."/>
            <person name="Hughes J."/>
            <person name="Goh Y."/>
            <person name="Benson A."/>
            <person name="Baldwin K."/>
            <person name="Lee J.-H."/>
            <person name="Diaz-Muniz I."/>
            <person name="Dosti B."/>
            <person name="Smeianov V."/>
            <person name="Wechter W."/>
            <person name="Barabote R."/>
            <person name="Lorca G."/>
            <person name="Altermann E."/>
            <person name="Barrangou R."/>
            <person name="Ganesan B."/>
            <person name="Xie Y."/>
            <person name="Rawsthorne H."/>
            <person name="Tamir D."/>
            <person name="Parker C."/>
            <person name="Breidt F."/>
            <person name="Broadbent J.R."/>
            <person name="Hutkins R."/>
            <person name="O'Sullivan D."/>
            <person name="Steele J."/>
            <person name="Unlu G."/>
            <person name="Saier M.H. Jr."/>
            <person name="Klaenhammer T."/>
            <person name="Richardson P."/>
            <person name="Kozyavkin S."/>
            <person name="Weimer B.C."/>
            <person name="Mills D.A."/>
        </authorList>
    </citation>
    <scope>NUCLEOTIDE SEQUENCE [LARGE SCALE GENOMIC DNA]</scope>
    <source>
        <strain>ATCC 33323 / DSM 20243 / BCRC 14619 / CIP 102991 / JCM 1131 / KCTC 3163 / NCIMB 11718 / NCTC 13722 / AM63</strain>
    </source>
</reference>